<gene>
    <name evidence="1" type="primary">nuoH</name>
    <name type="ordered locus">PA2643</name>
</gene>
<accession>Q9I0J5</accession>
<sequence>MSWLTPALVTIILTVVKAIVVLLAVVICGALLSWVERRLLGLWQDRYGPNRVGPFGAFQLGADMVKMFFKEDWTPPFADKMIFTLAPVIAMGALLVAFAIVPITPTWGVADLNIGILFFFAMAGLTVYAVLFAGWSSNNKFALLGSLRASAQTISYEVFLALSLMGIVAQVGSFNMRDIVQYQIDNVWFIIPQFFGFCTFIIAGVAVTHRHPFDQPEAEQELADGYHIEYAGMKWGMFFVGEYIGIVLVSALLATLFFGGWHGPFLDTLPWLSFFYFAAKTGFFIMLFILIRASLPRPRYDQVMAFSWKVCLPLTLINLLVTGALVLAAAQ</sequence>
<feature type="chain" id="PRO_0000244930" description="NADH-quinone oxidoreductase subunit H">
    <location>
        <begin position="1"/>
        <end position="331"/>
    </location>
</feature>
<feature type="transmembrane region" description="Helical" evidence="1">
    <location>
        <begin position="7"/>
        <end position="27"/>
    </location>
</feature>
<feature type="transmembrane region" description="Helical" evidence="1">
    <location>
        <begin position="81"/>
        <end position="101"/>
    </location>
</feature>
<feature type="transmembrane region" description="Helical" evidence="1">
    <location>
        <begin position="114"/>
        <end position="134"/>
    </location>
</feature>
<feature type="transmembrane region" description="Helical" evidence="1">
    <location>
        <begin position="154"/>
        <end position="174"/>
    </location>
</feature>
<feature type="transmembrane region" description="Helical" evidence="1">
    <location>
        <begin position="187"/>
        <end position="207"/>
    </location>
</feature>
<feature type="transmembrane region" description="Helical" evidence="1">
    <location>
        <begin position="238"/>
        <end position="258"/>
    </location>
</feature>
<feature type="transmembrane region" description="Helical" evidence="1">
    <location>
        <begin position="271"/>
        <end position="291"/>
    </location>
</feature>
<feature type="transmembrane region" description="Helical" evidence="1">
    <location>
        <begin position="310"/>
        <end position="330"/>
    </location>
</feature>
<reference key="1">
    <citation type="journal article" date="2000" name="Nature">
        <title>Complete genome sequence of Pseudomonas aeruginosa PAO1, an opportunistic pathogen.</title>
        <authorList>
            <person name="Stover C.K."/>
            <person name="Pham X.-Q.T."/>
            <person name="Erwin A.L."/>
            <person name="Mizoguchi S.D."/>
            <person name="Warrener P."/>
            <person name="Hickey M.J."/>
            <person name="Brinkman F.S.L."/>
            <person name="Hufnagle W.O."/>
            <person name="Kowalik D.J."/>
            <person name="Lagrou M."/>
            <person name="Garber R.L."/>
            <person name="Goltry L."/>
            <person name="Tolentino E."/>
            <person name="Westbrock-Wadman S."/>
            <person name="Yuan Y."/>
            <person name="Brody L.L."/>
            <person name="Coulter S.N."/>
            <person name="Folger K.R."/>
            <person name="Kas A."/>
            <person name="Larbig K."/>
            <person name="Lim R.M."/>
            <person name="Smith K.A."/>
            <person name="Spencer D.H."/>
            <person name="Wong G.K.-S."/>
            <person name="Wu Z."/>
            <person name="Paulsen I.T."/>
            <person name="Reizer J."/>
            <person name="Saier M.H. Jr."/>
            <person name="Hancock R.E.W."/>
            <person name="Lory S."/>
            <person name="Olson M.V."/>
        </authorList>
    </citation>
    <scope>NUCLEOTIDE SEQUENCE [LARGE SCALE GENOMIC DNA]</scope>
    <source>
        <strain>ATCC 15692 / DSM 22644 / CIP 104116 / JCM 14847 / LMG 12228 / 1C / PRS 101 / PAO1</strain>
    </source>
</reference>
<comment type="function">
    <text evidence="1">NDH-1 shuttles electrons from NADH, via FMN and iron-sulfur (Fe-S) centers, to quinones in the respiratory chain. The immediate electron acceptor for the enzyme in this species is believed to be ubiquinone. Couples the redox reaction to proton translocation (for every two electrons transferred, four hydrogen ions are translocated across the cytoplasmic membrane), and thus conserves the redox energy in a proton gradient. This subunit may bind ubiquinone.</text>
</comment>
<comment type="catalytic activity">
    <reaction evidence="1">
        <text>a quinone + NADH + 5 H(+)(in) = a quinol + NAD(+) + 4 H(+)(out)</text>
        <dbReference type="Rhea" id="RHEA:57888"/>
        <dbReference type="ChEBI" id="CHEBI:15378"/>
        <dbReference type="ChEBI" id="CHEBI:24646"/>
        <dbReference type="ChEBI" id="CHEBI:57540"/>
        <dbReference type="ChEBI" id="CHEBI:57945"/>
        <dbReference type="ChEBI" id="CHEBI:132124"/>
    </reaction>
</comment>
<comment type="subunit">
    <text evidence="1">NDH-1 is composed of 13 different subunits. Subunits NuoA, H, J, K, L, M, N constitute the membrane sector of the complex.</text>
</comment>
<comment type="subcellular location">
    <subcellularLocation>
        <location evidence="1">Cell inner membrane</location>
        <topology evidence="1">Multi-pass membrane protein</topology>
    </subcellularLocation>
</comment>
<comment type="similarity">
    <text evidence="1">Belongs to the complex I subunit 1 family.</text>
</comment>
<proteinExistence type="inferred from homology"/>
<name>NUOH_PSEAE</name>
<organism>
    <name type="scientific">Pseudomonas aeruginosa (strain ATCC 15692 / DSM 22644 / CIP 104116 / JCM 14847 / LMG 12228 / 1C / PRS 101 / PAO1)</name>
    <dbReference type="NCBI Taxonomy" id="208964"/>
    <lineage>
        <taxon>Bacteria</taxon>
        <taxon>Pseudomonadati</taxon>
        <taxon>Pseudomonadota</taxon>
        <taxon>Gammaproteobacteria</taxon>
        <taxon>Pseudomonadales</taxon>
        <taxon>Pseudomonadaceae</taxon>
        <taxon>Pseudomonas</taxon>
    </lineage>
</organism>
<evidence type="ECO:0000255" key="1">
    <source>
        <dbReference type="HAMAP-Rule" id="MF_01350"/>
    </source>
</evidence>
<protein>
    <recommendedName>
        <fullName evidence="1">NADH-quinone oxidoreductase subunit H</fullName>
        <ecNumber evidence="1">7.1.1.-</ecNumber>
    </recommendedName>
    <alternativeName>
        <fullName evidence="1">NADH dehydrogenase I subunit H</fullName>
    </alternativeName>
    <alternativeName>
        <fullName evidence="1">NDH-1 subunit H</fullName>
    </alternativeName>
</protein>
<keyword id="KW-0997">Cell inner membrane</keyword>
<keyword id="KW-1003">Cell membrane</keyword>
<keyword id="KW-0472">Membrane</keyword>
<keyword id="KW-0520">NAD</keyword>
<keyword id="KW-0874">Quinone</keyword>
<keyword id="KW-1185">Reference proteome</keyword>
<keyword id="KW-1278">Translocase</keyword>
<keyword id="KW-0812">Transmembrane</keyword>
<keyword id="KW-1133">Transmembrane helix</keyword>
<keyword id="KW-0830">Ubiquinone</keyword>
<dbReference type="EC" id="7.1.1.-" evidence="1"/>
<dbReference type="EMBL" id="AE004091">
    <property type="protein sequence ID" value="AAG06031.1"/>
    <property type="molecule type" value="Genomic_DNA"/>
</dbReference>
<dbReference type="PIR" id="H83314">
    <property type="entry name" value="H83314"/>
</dbReference>
<dbReference type="RefSeq" id="NP_251333.1">
    <property type="nucleotide sequence ID" value="NC_002516.2"/>
</dbReference>
<dbReference type="RefSeq" id="WP_003090465.1">
    <property type="nucleotide sequence ID" value="NZ_QZGE01000008.1"/>
</dbReference>
<dbReference type="SMR" id="Q9I0J5"/>
<dbReference type="FunCoup" id="Q9I0J5">
    <property type="interactions" value="218"/>
</dbReference>
<dbReference type="STRING" id="208964.PA2643"/>
<dbReference type="PaxDb" id="208964-PA2643"/>
<dbReference type="DNASU" id="882350"/>
<dbReference type="GeneID" id="882350"/>
<dbReference type="KEGG" id="pae:PA2643"/>
<dbReference type="PATRIC" id="fig|208964.12.peg.2766"/>
<dbReference type="PseudoCAP" id="PA2643"/>
<dbReference type="HOGENOM" id="CLU_015134_0_1_6"/>
<dbReference type="InParanoid" id="Q9I0J5"/>
<dbReference type="OrthoDB" id="9803734at2"/>
<dbReference type="PhylomeDB" id="Q9I0J5"/>
<dbReference type="BioCyc" id="PAER208964:G1FZ6-2683-MONOMER"/>
<dbReference type="Proteomes" id="UP000002438">
    <property type="component" value="Chromosome"/>
</dbReference>
<dbReference type="GO" id="GO:0005886">
    <property type="term" value="C:plasma membrane"/>
    <property type="evidence" value="ECO:0007669"/>
    <property type="project" value="UniProtKB-SubCell"/>
</dbReference>
<dbReference type="GO" id="GO:0045271">
    <property type="term" value="C:respiratory chain complex I"/>
    <property type="evidence" value="ECO:0000318"/>
    <property type="project" value="GO_Central"/>
</dbReference>
<dbReference type="GO" id="GO:0016655">
    <property type="term" value="F:oxidoreductase activity, acting on NAD(P)H, quinone or similar compound as acceptor"/>
    <property type="evidence" value="ECO:0007669"/>
    <property type="project" value="UniProtKB-UniRule"/>
</dbReference>
<dbReference type="GO" id="GO:0048038">
    <property type="term" value="F:quinone binding"/>
    <property type="evidence" value="ECO:0007669"/>
    <property type="project" value="UniProtKB-KW"/>
</dbReference>
<dbReference type="GO" id="GO:0009060">
    <property type="term" value="P:aerobic respiration"/>
    <property type="evidence" value="ECO:0000318"/>
    <property type="project" value="GO_Central"/>
</dbReference>
<dbReference type="HAMAP" id="MF_01350">
    <property type="entry name" value="NDH1_NuoH"/>
    <property type="match status" value="1"/>
</dbReference>
<dbReference type="InterPro" id="IPR001694">
    <property type="entry name" value="NADH_UbQ_OxRdtase_su1/FPO"/>
</dbReference>
<dbReference type="InterPro" id="IPR018086">
    <property type="entry name" value="NADH_UbQ_OxRdtase_su1_CS"/>
</dbReference>
<dbReference type="NCBIfam" id="NF004740">
    <property type="entry name" value="PRK06076.1-1"/>
    <property type="match status" value="1"/>
</dbReference>
<dbReference type="NCBIfam" id="NF004741">
    <property type="entry name" value="PRK06076.1-2"/>
    <property type="match status" value="1"/>
</dbReference>
<dbReference type="PANTHER" id="PTHR11432">
    <property type="entry name" value="NADH DEHYDROGENASE SUBUNIT 1"/>
    <property type="match status" value="1"/>
</dbReference>
<dbReference type="PANTHER" id="PTHR11432:SF3">
    <property type="entry name" value="NADH-UBIQUINONE OXIDOREDUCTASE CHAIN 1"/>
    <property type="match status" value="1"/>
</dbReference>
<dbReference type="Pfam" id="PF00146">
    <property type="entry name" value="NADHdh"/>
    <property type="match status" value="1"/>
</dbReference>
<dbReference type="PROSITE" id="PS00668">
    <property type="entry name" value="COMPLEX1_ND1_2"/>
    <property type="match status" value="1"/>
</dbReference>